<protein>
    <recommendedName>
        <fullName>Accessory Sec system protein Asp1</fullName>
    </recommendedName>
    <alternativeName>
        <fullName>Accessory secretory protein Asp1</fullName>
    </alternativeName>
    <alternativeName>
        <fullName>Orf1</fullName>
    </alternativeName>
</protein>
<feature type="chain" id="PRO_0000414196" description="Accessory Sec system protein Asp1">
    <location>
        <begin position="1"/>
        <end position="526"/>
    </location>
</feature>
<feature type="coiled-coil region" evidence="1">
    <location>
        <begin position="359"/>
        <end position="386"/>
    </location>
</feature>
<feature type="strand" evidence="5">
    <location>
        <begin position="2"/>
        <end position="5"/>
    </location>
</feature>
<feature type="strand" evidence="5">
    <location>
        <begin position="11"/>
        <end position="13"/>
    </location>
</feature>
<feature type="helix" evidence="5">
    <location>
        <begin position="23"/>
        <end position="25"/>
    </location>
</feature>
<feature type="helix" evidence="5">
    <location>
        <begin position="34"/>
        <end position="44"/>
    </location>
</feature>
<feature type="strand" evidence="5">
    <location>
        <begin position="49"/>
        <end position="53"/>
    </location>
</feature>
<feature type="helix" evidence="5">
    <location>
        <begin position="60"/>
        <end position="66"/>
    </location>
</feature>
<feature type="strand" evidence="5">
    <location>
        <begin position="73"/>
        <end position="76"/>
    </location>
</feature>
<feature type="helix" evidence="5">
    <location>
        <begin position="77"/>
        <end position="81"/>
    </location>
</feature>
<feature type="helix" evidence="4">
    <location>
        <begin position="94"/>
        <end position="96"/>
    </location>
</feature>
<feature type="strand" evidence="5">
    <location>
        <begin position="103"/>
        <end position="107"/>
    </location>
</feature>
<feature type="strand" evidence="5">
    <location>
        <begin position="112"/>
        <end position="116"/>
    </location>
</feature>
<feature type="strand" evidence="5">
    <location>
        <begin position="119"/>
        <end position="126"/>
    </location>
</feature>
<feature type="strand" evidence="5">
    <location>
        <begin position="132"/>
        <end position="150"/>
    </location>
</feature>
<feature type="turn" evidence="5">
    <location>
        <begin position="151"/>
        <end position="153"/>
    </location>
</feature>
<feature type="strand" evidence="5">
    <location>
        <begin position="154"/>
        <end position="172"/>
    </location>
</feature>
<feature type="strand" evidence="5">
    <location>
        <begin position="178"/>
        <end position="183"/>
    </location>
</feature>
<feature type="strand" evidence="5">
    <location>
        <begin position="185"/>
        <end position="187"/>
    </location>
</feature>
<feature type="strand" evidence="5">
    <location>
        <begin position="191"/>
        <end position="193"/>
    </location>
</feature>
<feature type="helix" evidence="5">
    <location>
        <begin position="195"/>
        <end position="197"/>
    </location>
</feature>
<feature type="turn" evidence="5">
    <location>
        <begin position="198"/>
        <end position="200"/>
    </location>
</feature>
<feature type="strand" evidence="5">
    <location>
        <begin position="202"/>
        <end position="208"/>
    </location>
</feature>
<feature type="helix" evidence="5">
    <location>
        <begin position="209"/>
        <end position="221"/>
    </location>
</feature>
<feature type="strand" evidence="5">
    <location>
        <begin position="230"/>
        <end position="234"/>
    </location>
</feature>
<feature type="helix" evidence="5">
    <location>
        <begin position="241"/>
        <end position="244"/>
    </location>
</feature>
<feature type="strand" evidence="5">
    <location>
        <begin position="252"/>
        <end position="257"/>
    </location>
</feature>
<feature type="helix" evidence="5">
    <location>
        <begin position="259"/>
        <end position="262"/>
    </location>
</feature>
<feature type="helix" evidence="5">
    <location>
        <begin position="268"/>
        <end position="270"/>
    </location>
</feature>
<feature type="helix" evidence="5">
    <location>
        <begin position="271"/>
        <end position="276"/>
    </location>
</feature>
<feature type="strand" evidence="5">
    <location>
        <begin position="278"/>
        <end position="283"/>
    </location>
</feature>
<feature type="helix" evidence="5">
    <location>
        <begin position="285"/>
        <end position="294"/>
    </location>
</feature>
<feature type="helix" evidence="5">
    <location>
        <begin position="296"/>
        <end position="301"/>
    </location>
</feature>
<feature type="strand" evidence="5">
    <location>
        <begin position="302"/>
        <end position="304"/>
    </location>
</feature>
<feature type="helix" evidence="4">
    <location>
        <begin position="317"/>
        <end position="319"/>
    </location>
</feature>
<feature type="strand" evidence="5">
    <location>
        <begin position="321"/>
        <end position="328"/>
    </location>
</feature>
<feature type="helix" evidence="4">
    <location>
        <begin position="331"/>
        <end position="333"/>
    </location>
</feature>
<feature type="helix" evidence="5">
    <location>
        <begin position="337"/>
        <end position="348"/>
    </location>
</feature>
<feature type="strand" evidence="5">
    <location>
        <begin position="353"/>
        <end position="361"/>
    </location>
</feature>
<feature type="helix" evidence="5">
    <location>
        <begin position="364"/>
        <end position="381"/>
    </location>
</feature>
<feature type="helix" evidence="5">
    <location>
        <begin position="384"/>
        <end position="387"/>
    </location>
</feature>
<feature type="helix" evidence="4">
    <location>
        <begin position="390"/>
        <end position="393"/>
    </location>
</feature>
<feature type="strand" evidence="5">
    <location>
        <begin position="409"/>
        <end position="416"/>
    </location>
</feature>
<feature type="helix" evidence="5">
    <location>
        <begin position="419"/>
        <end position="428"/>
    </location>
</feature>
<feature type="strand" evidence="5">
    <location>
        <begin position="431"/>
        <end position="434"/>
    </location>
</feature>
<feature type="strand" evidence="5">
    <location>
        <begin position="436"/>
        <end position="438"/>
    </location>
</feature>
<feature type="helix" evidence="5">
    <location>
        <begin position="441"/>
        <end position="450"/>
    </location>
</feature>
<feature type="strand" evidence="5">
    <location>
        <begin position="454"/>
        <end position="458"/>
    </location>
</feature>
<feature type="strand" evidence="5">
    <location>
        <begin position="461"/>
        <end position="463"/>
    </location>
</feature>
<feature type="turn" evidence="5">
    <location>
        <begin position="466"/>
        <end position="468"/>
    </location>
</feature>
<feature type="strand" evidence="5">
    <location>
        <begin position="469"/>
        <end position="471"/>
    </location>
</feature>
<feature type="helix" evidence="5">
    <location>
        <begin position="475"/>
        <end position="477"/>
    </location>
</feature>
<feature type="helix" evidence="5">
    <location>
        <begin position="478"/>
        <end position="486"/>
    </location>
</feature>
<feature type="strand" evidence="5">
    <location>
        <begin position="487"/>
        <end position="489"/>
    </location>
</feature>
<feature type="helix" evidence="5">
    <location>
        <begin position="490"/>
        <end position="504"/>
    </location>
</feature>
<feature type="helix" evidence="5">
    <location>
        <begin position="508"/>
        <end position="525"/>
    </location>
</feature>
<name>ASP1_STRGN</name>
<organism>
    <name type="scientific">Streptococcus gordonii</name>
    <dbReference type="NCBI Taxonomy" id="1302"/>
    <lineage>
        <taxon>Bacteria</taxon>
        <taxon>Bacillati</taxon>
        <taxon>Bacillota</taxon>
        <taxon>Bacilli</taxon>
        <taxon>Lactobacillales</taxon>
        <taxon>Streptococcaceae</taxon>
        <taxon>Streptococcus</taxon>
    </lineage>
</organism>
<gene>
    <name type="primary">asp1</name>
</gene>
<evidence type="ECO:0000255" key="1"/>
<evidence type="ECO:0000269" key="2">
    <source>
    </source>
</evidence>
<evidence type="ECO:0000305" key="3"/>
<evidence type="ECO:0007829" key="4">
    <source>
        <dbReference type="PDB" id="5VAE"/>
    </source>
</evidence>
<evidence type="ECO:0007829" key="5">
    <source>
        <dbReference type="PDB" id="5VAF"/>
    </source>
</evidence>
<accession>Q9AET9</accession>
<proteinExistence type="evidence at protein level"/>
<dbReference type="EMBL" id="AY028381">
    <property type="protein sequence ID" value="AAK16998.1"/>
    <property type="molecule type" value="Genomic_DNA"/>
</dbReference>
<dbReference type="RefSeq" id="WP_061598990.1">
    <property type="nucleotide sequence ID" value="NZ_CP113953.1"/>
</dbReference>
<dbReference type="PDB" id="5VAE">
    <property type="method" value="X-ray"/>
    <property type="resolution" value="3.11 A"/>
    <property type="chains" value="A/C/E/G=1-526"/>
</dbReference>
<dbReference type="PDB" id="5VAF">
    <property type="method" value="X-ray"/>
    <property type="resolution" value="2.77 A"/>
    <property type="chains" value="A/B/C/D=1-526"/>
</dbReference>
<dbReference type="PDBsum" id="5VAE"/>
<dbReference type="PDBsum" id="5VAF"/>
<dbReference type="SMR" id="Q9AET9"/>
<dbReference type="TCDB" id="3.A.5.10.1">
    <property type="family name" value="the general secretory pathway (sec) family"/>
</dbReference>
<dbReference type="GO" id="GO:0015031">
    <property type="term" value="P:protein transport"/>
    <property type="evidence" value="ECO:0007669"/>
    <property type="project" value="UniProtKB-KW"/>
</dbReference>
<dbReference type="InterPro" id="IPR022372">
    <property type="entry name" value="Accessory_SS_Asp1"/>
</dbReference>
<dbReference type="NCBIfam" id="TIGR03713">
    <property type="entry name" value="acc_sec_asp1"/>
    <property type="match status" value="1"/>
</dbReference>
<dbReference type="Pfam" id="PF16993">
    <property type="entry name" value="Asp1"/>
    <property type="match status" value="1"/>
</dbReference>
<comment type="function">
    <text evidence="2">Part of the accessory SecA2/SecY2 system specifically required to export GspB, a serine-rich repeat cell wall protein encoded upstream in the same operon.</text>
</comment>
<comment type="subunit">
    <text>Part of the accessory SecA2/SecY2 protein translocation apparatus required to export cell wall protein GspB.</text>
</comment>
<comment type="disruption phenotype">
    <text evidence="2">Loss of export of cell wall protein GspB, the protein accumulates intracellularly in protoplasts.</text>
</comment>
<comment type="similarity">
    <text evidence="3">Belongs to the accessory Sec system protein Asp1 family.</text>
</comment>
<reference key="1">
    <citation type="journal article" date="2002" name="Mol. Microbiol.">
        <title>An accessory sec locus of Streptococcus gordonii is required for export of the surface protein GspB and for normal levels of binding to human platelets.</title>
        <authorList>
            <person name="Bensing B.A."/>
            <person name="Sullam P.M."/>
        </authorList>
    </citation>
    <scope>NUCLEOTIDE SEQUENCE [GENOMIC DNA]</scope>
    <source>
        <strain>M99</strain>
    </source>
</reference>
<reference key="2">
    <citation type="journal article" date="2004" name="Mol. Microbiol.">
        <title>Genes in the accessory sec locus of Streptococcus gordonii have three functionally distinct effects on the expression of the platelet-binding protein GspB.</title>
        <authorList>
            <person name="Takamatsu D."/>
            <person name="Bensing B.A."/>
            <person name="Sullam P.M."/>
        </authorList>
    </citation>
    <scope>FUNCTION</scope>
    <scope>DISRUPTION PHENOTYPE</scope>
    <source>
        <strain>M99</strain>
    </source>
</reference>
<sequence length="526" mass="62423">MYYFIPSWSGSGKRVWHRDIIPWYRSMQRLEFDDTIHQIRIFHSENLPVKLLLQAYMPHARYFLHRQDIFETEYYSVFDEIQAVESNDMQVLQIKDLEWEDDCEFIYTPFLIIVRRQGQLYAHVEFGVEGFISFIKFFKDDQLEKLNIFDDRGFVSSIVYYEDGQEVCQDYLNPNGDWRIREYLKFENSHVVVNPVFSRDFDKLEYECMPDLILEKLGYYISHNVEEDSRFVVAAQPFTNQGVLDLLPQHSHSILSFFHERNQASNIENLKADLEYADLVLTDRMDFKETLQNYFPLQAEKIHYLSPFDTRLQLGKSQQRHESKIFYQIDLSELLNDYAIFKVLFYVAQHPDTELVIGVYNAWQEGIKQVENKVEELISDYLDLKDFIKKSFKNNQAENPLPENQELEYRFRIRNITDELSLIQELDDTRLIIDLSQQPNLYTQIAGISAGIPQINLVASDYVTHLQNGYILDSISQLAVAADYYLQGLKNWNQALIYSIEKIKLNTGHQVIKRWEKWLKEAIDEK</sequence>
<keyword id="KW-0002">3D-structure</keyword>
<keyword id="KW-0175">Coiled coil</keyword>
<keyword id="KW-0653">Protein transport</keyword>
<keyword id="KW-0811">Translocation</keyword>
<keyword id="KW-0813">Transport</keyword>